<geneLocation type="chloroplast"/>
<evidence type="ECO:0000250" key="1"/>
<evidence type="ECO:0000305" key="2"/>
<reference key="1">
    <citation type="journal article" date="2007" name="Mol. Genet. Genomics">
        <title>Chloroplast genomes of the diatoms Phaeodactylum tricornutum and Thalassiosira pseudonana: comparison with other plastid genomes of the red lineage.</title>
        <authorList>
            <person name="Oudot-Le Secq M.-P."/>
            <person name="Grimwood J."/>
            <person name="Shapiro H."/>
            <person name="Armbrust E.V."/>
            <person name="Bowler C."/>
            <person name="Green B.R."/>
        </authorList>
    </citation>
    <scope>NUCLEOTIDE SEQUENCE [LARGE SCALE GENOMIC DNA]</scope>
    <source>
        <strain>CCMP1335 / NEPCC58 / CCAP 1085/12</strain>
    </source>
</reference>
<comment type="function">
    <text evidence="1">One of two assembly initiator proteins, it binds directly to the 5'-end of the 23S rRNA, where it nucleates assembly of the 50S subunit.</text>
</comment>
<comment type="subunit">
    <text evidence="1">Part of the 50S ribosomal subunit.</text>
</comment>
<comment type="subcellular location">
    <subcellularLocation>
        <location>Plastid</location>
        <location>Chloroplast</location>
    </subcellularLocation>
</comment>
<comment type="similarity">
    <text evidence="2">Belongs to the universal ribosomal protein uL24 family.</text>
</comment>
<proteinExistence type="inferred from homology"/>
<sequence>MPKGKNLHVKIGDNVKIISGFDKNKTGEVTKIYRNTGKILVKGINFKFKHIKPNTESDVGEIKQFEAPIHHSNVKLI</sequence>
<organism>
    <name type="scientific">Thalassiosira pseudonana</name>
    <name type="common">Marine diatom</name>
    <name type="synonym">Cyclotella nana</name>
    <dbReference type="NCBI Taxonomy" id="35128"/>
    <lineage>
        <taxon>Eukaryota</taxon>
        <taxon>Sar</taxon>
        <taxon>Stramenopiles</taxon>
        <taxon>Ochrophyta</taxon>
        <taxon>Bacillariophyta</taxon>
        <taxon>Coscinodiscophyceae</taxon>
        <taxon>Thalassiosirophycidae</taxon>
        <taxon>Thalassiosirales</taxon>
        <taxon>Thalassiosiraceae</taxon>
        <taxon>Thalassiosira</taxon>
    </lineage>
</organism>
<accession>A0T0Y4</accession>
<feature type="chain" id="PRO_0000355746" description="Large ribosomal subunit protein uL24c">
    <location>
        <begin position="1"/>
        <end position="77"/>
    </location>
</feature>
<keyword id="KW-0150">Chloroplast</keyword>
<keyword id="KW-0934">Plastid</keyword>
<keyword id="KW-0687">Ribonucleoprotein</keyword>
<keyword id="KW-0689">Ribosomal protein</keyword>
<keyword id="KW-0694">RNA-binding</keyword>
<keyword id="KW-0699">rRNA-binding</keyword>
<protein>
    <recommendedName>
        <fullName evidence="2">Large ribosomal subunit protein uL24c</fullName>
    </recommendedName>
    <alternativeName>
        <fullName>50S ribosomal protein L24, chloroplastic</fullName>
    </alternativeName>
</protein>
<dbReference type="EMBL" id="EF067921">
    <property type="protein sequence ID" value="ABK20819.1"/>
    <property type="molecule type" value="Genomic_DNA"/>
</dbReference>
<dbReference type="RefSeq" id="YP_874596.1">
    <property type="nucleotide sequence ID" value="NC_008589.1"/>
</dbReference>
<dbReference type="SMR" id="A0T0Y4"/>
<dbReference type="STRING" id="35128.A0T0Y4"/>
<dbReference type="GeneID" id="4524759"/>
<dbReference type="InParanoid" id="A0T0Y4"/>
<dbReference type="GO" id="GO:0009507">
    <property type="term" value="C:chloroplast"/>
    <property type="evidence" value="ECO:0007669"/>
    <property type="project" value="UniProtKB-SubCell"/>
</dbReference>
<dbReference type="GO" id="GO:1990904">
    <property type="term" value="C:ribonucleoprotein complex"/>
    <property type="evidence" value="ECO:0007669"/>
    <property type="project" value="UniProtKB-KW"/>
</dbReference>
<dbReference type="GO" id="GO:0005840">
    <property type="term" value="C:ribosome"/>
    <property type="evidence" value="ECO:0007669"/>
    <property type="project" value="UniProtKB-KW"/>
</dbReference>
<dbReference type="GO" id="GO:0019843">
    <property type="term" value="F:rRNA binding"/>
    <property type="evidence" value="ECO:0007669"/>
    <property type="project" value="UniProtKB-UniRule"/>
</dbReference>
<dbReference type="GO" id="GO:0003735">
    <property type="term" value="F:structural constituent of ribosome"/>
    <property type="evidence" value="ECO:0007669"/>
    <property type="project" value="InterPro"/>
</dbReference>
<dbReference type="GO" id="GO:0006412">
    <property type="term" value="P:translation"/>
    <property type="evidence" value="ECO:0007669"/>
    <property type="project" value="UniProtKB-UniRule"/>
</dbReference>
<dbReference type="CDD" id="cd06089">
    <property type="entry name" value="KOW_RPL26"/>
    <property type="match status" value="1"/>
</dbReference>
<dbReference type="FunFam" id="2.30.30.30:FF:000125">
    <property type="entry name" value="50S ribosomal protein L24, chloroplastic"/>
    <property type="match status" value="1"/>
</dbReference>
<dbReference type="Gene3D" id="2.30.30.30">
    <property type="match status" value="1"/>
</dbReference>
<dbReference type="HAMAP" id="MF_01326_B">
    <property type="entry name" value="Ribosomal_uL24_B"/>
    <property type="match status" value="1"/>
</dbReference>
<dbReference type="InterPro" id="IPR005824">
    <property type="entry name" value="KOW"/>
</dbReference>
<dbReference type="InterPro" id="IPR014722">
    <property type="entry name" value="Rib_uL2_dom2"/>
</dbReference>
<dbReference type="InterPro" id="IPR003256">
    <property type="entry name" value="Ribosomal_uL24"/>
</dbReference>
<dbReference type="InterPro" id="IPR005825">
    <property type="entry name" value="Ribosomal_uL24_CS"/>
</dbReference>
<dbReference type="InterPro" id="IPR041988">
    <property type="entry name" value="Ribosomal_uL24_KOW"/>
</dbReference>
<dbReference type="InterPro" id="IPR008991">
    <property type="entry name" value="Translation_prot_SH3-like_sf"/>
</dbReference>
<dbReference type="NCBIfam" id="TIGR01079">
    <property type="entry name" value="rplX_bact"/>
    <property type="match status" value="1"/>
</dbReference>
<dbReference type="PANTHER" id="PTHR12903">
    <property type="entry name" value="MITOCHONDRIAL RIBOSOMAL PROTEIN L24"/>
    <property type="match status" value="1"/>
</dbReference>
<dbReference type="Pfam" id="PF00467">
    <property type="entry name" value="KOW"/>
    <property type="match status" value="1"/>
</dbReference>
<dbReference type="Pfam" id="PF17136">
    <property type="entry name" value="ribosomal_L24"/>
    <property type="match status" value="1"/>
</dbReference>
<dbReference type="SMART" id="SM00739">
    <property type="entry name" value="KOW"/>
    <property type="match status" value="1"/>
</dbReference>
<dbReference type="SUPFAM" id="SSF50104">
    <property type="entry name" value="Translation proteins SH3-like domain"/>
    <property type="match status" value="1"/>
</dbReference>
<dbReference type="PROSITE" id="PS01108">
    <property type="entry name" value="RIBOSOMAL_L24"/>
    <property type="match status" value="1"/>
</dbReference>
<gene>
    <name type="primary">rpl24</name>
</gene>
<name>RK24_THAPS</name>